<keyword id="KW-0963">Cytoplasm</keyword>
<keyword id="KW-0489">Methyltransferase</keyword>
<keyword id="KW-0949">S-adenosyl-L-methionine</keyword>
<keyword id="KW-0808">Transferase</keyword>
<accession>A0RQL1</accession>
<comment type="function">
    <text evidence="1">Methylates ribosomal protein L11.</text>
</comment>
<comment type="catalytic activity">
    <reaction evidence="1">
        <text>L-lysyl-[protein] + 3 S-adenosyl-L-methionine = N(6),N(6),N(6)-trimethyl-L-lysyl-[protein] + 3 S-adenosyl-L-homocysteine + 3 H(+)</text>
        <dbReference type="Rhea" id="RHEA:54192"/>
        <dbReference type="Rhea" id="RHEA-COMP:9752"/>
        <dbReference type="Rhea" id="RHEA-COMP:13826"/>
        <dbReference type="ChEBI" id="CHEBI:15378"/>
        <dbReference type="ChEBI" id="CHEBI:29969"/>
        <dbReference type="ChEBI" id="CHEBI:57856"/>
        <dbReference type="ChEBI" id="CHEBI:59789"/>
        <dbReference type="ChEBI" id="CHEBI:61961"/>
    </reaction>
</comment>
<comment type="subcellular location">
    <subcellularLocation>
        <location evidence="1">Cytoplasm</location>
    </subcellularLocation>
</comment>
<comment type="similarity">
    <text evidence="1">Belongs to the methyltransferase superfamily. PrmA family.</text>
</comment>
<organism>
    <name type="scientific">Campylobacter fetus subsp. fetus (strain 82-40)</name>
    <dbReference type="NCBI Taxonomy" id="360106"/>
    <lineage>
        <taxon>Bacteria</taxon>
        <taxon>Pseudomonadati</taxon>
        <taxon>Campylobacterota</taxon>
        <taxon>Epsilonproteobacteria</taxon>
        <taxon>Campylobacterales</taxon>
        <taxon>Campylobacteraceae</taxon>
        <taxon>Campylobacter</taxon>
    </lineage>
</organism>
<evidence type="ECO:0000255" key="1">
    <source>
        <dbReference type="HAMAP-Rule" id="MF_00735"/>
    </source>
</evidence>
<gene>
    <name evidence="1" type="primary">prmA</name>
    <name type="ordered locus">CFF8240_1348</name>
</gene>
<dbReference type="EC" id="2.1.1.-" evidence="1"/>
<dbReference type="EMBL" id="CP000487">
    <property type="protein sequence ID" value="ABK82421.1"/>
    <property type="molecule type" value="Genomic_DNA"/>
</dbReference>
<dbReference type="RefSeq" id="WP_002850167.1">
    <property type="nucleotide sequence ID" value="NC_008599.1"/>
</dbReference>
<dbReference type="SMR" id="A0RQL1"/>
<dbReference type="KEGG" id="cff:CFF8240_1348"/>
<dbReference type="eggNOG" id="COG2264">
    <property type="taxonomic scope" value="Bacteria"/>
</dbReference>
<dbReference type="HOGENOM" id="CLU_049382_1_0_7"/>
<dbReference type="Proteomes" id="UP000000760">
    <property type="component" value="Chromosome"/>
</dbReference>
<dbReference type="GO" id="GO:0005737">
    <property type="term" value="C:cytoplasm"/>
    <property type="evidence" value="ECO:0007669"/>
    <property type="project" value="UniProtKB-SubCell"/>
</dbReference>
<dbReference type="GO" id="GO:0016279">
    <property type="term" value="F:protein-lysine N-methyltransferase activity"/>
    <property type="evidence" value="ECO:0007669"/>
    <property type="project" value="RHEA"/>
</dbReference>
<dbReference type="GO" id="GO:0032259">
    <property type="term" value="P:methylation"/>
    <property type="evidence" value="ECO:0007669"/>
    <property type="project" value="UniProtKB-KW"/>
</dbReference>
<dbReference type="CDD" id="cd02440">
    <property type="entry name" value="AdoMet_MTases"/>
    <property type="match status" value="1"/>
</dbReference>
<dbReference type="Gene3D" id="3.40.50.150">
    <property type="entry name" value="Vaccinia Virus protein VP39"/>
    <property type="match status" value="1"/>
</dbReference>
<dbReference type="HAMAP" id="MF_00735">
    <property type="entry name" value="Methyltr_PrmA"/>
    <property type="match status" value="1"/>
</dbReference>
<dbReference type="InterPro" id="IPR050078">
    <property type="entry name" value="Ribosomal_L11_MeTrfase_PrmA"/>
</dbReference>
<dbReference type="InterPro" id="IPR004498">
    <property type="entry name" value="Ribosomal_PrmA_MeTrfase"/>
</dbReference>
<dbReference type="InterPro" id="IPR029063">
    <property type="entry name" value="SAM-dependent_MTases_sf"/>
</dbReference>
<dbReference type="NCBIfam" id="NF001786">
    <property type="entry name" value="PRK00517.2-4"/>
    <property type="match status" value="1"/>
</dbReference>
<dbReference type="PANTHER" id="PTHR43648">
    <property type="entry name" value="ELECTRON TRANSFER FLAVOPROTEIN BETA SUBUNIT LYSINE METHYLTRANSFERASE"/>
    <property type="match status" value="1"/>
</dbReference>
<dbReference type="PANTHER" id="PTHR43648:SF1">
    <property type="entry name" value="ELECTRON TRANSFER FLAVOPROTEIN BETA SUBUNIT LYSINE METHYLTRANSFERASE"/>
    <property type="match status" value="1"/>
</dbReference>
<dbReference type="Pfam" id="PF06325">
    <property type="entry name" value="PrmA"/>
    <property type="match status" value="1"/>
</dbReference>
<dbReference type="PIRSF" id="PIRSF000401">
    <property type="entry name" value="RPL11_MTase"/>
    <property type="match status" value="1"/>
</dbReference>
<dbReference type="SUPFAM" id="SSF53335">
    <property type="entry name" value="S-adenosyl-L-methionine-dependent methyltransferases"/>
    <property type="match status" value="1"/>
</dbReference>
<feature type="chain" id="PRO_1000192596" description="Ribosomal protein L11 methyltransferase">
    <location>
        <begin position="1"/>
        <end position="275"/>
    </location>
</feature>
<feature type="binding site" evidence="1">
    <location>
        <position position="123"/>
    </location>
    <ligand>
        <name>S-adenosyl-L-methionine</name>
        <dbReference type="ChEBI" id="CHEBI:59789"/>
    </ligand>
</feature>
<feature type="binding site" evidence="1">
    <location>
        <position position="146"/>
    </location>
    <ligand>
        <name>S-adenosyl-L-methionine</name>
        <dbReference type="ChEBI" id="CHEBI:59789"/>
    </ligand>
</feature>
<feature type="binding site" evidence="1">
    <location>
        <position position="167"/>
    </location>
    <ligand>
        <name>S-adenosyl-L-methionine</name>
        <dbReference type="ChEBI" id="CHEBI:59789"/>
    </ligand>
</feature>
<feature type="binding site" evidence="1">
    <location>
        <position position="208"/>
    </location>
    <ligand>
        <name>S-adenosyl-L-methionine</name>
        <dbReference type="ChEBI" id="CHEBI:59789"/>
    </ligand>
</feature>
<proteinExistence type="inferred from homology"/>
<name>PRMA_CAMFF</name>
<protein>
    <recommendedName>
        <fullName evidence="1">Ribosomal protein L11 methyltransferase</fullName>
        <shortName evidence="1">L11 Mtase</shortName>
        <ecNumber evidence="1">2.1.1.-</ecNumber>
    </recommendedName>
</protein>
<sequence length="275" mass="30731">MKEKFFELKVLSRKSDVLKEFAFELGATCIEEIENGFILRDEDDLSNISWGLEEFAGRIGSDISTSLEIKDNIDWINEYKKGIKPVSSGKFYIRPSWEEQKDGFIDIIIDPALAFGSGHHESTSSCLNLISKYINLKECKIALDVGCGSGILSIALAKLGLAVDACDTDEQAVLSSTDNARKNGIKFNNIWTGSITDANGRYDVVVANIISDVILLLSKDLKMHVNNNGYLILSGILTKYKDRILQAFGDLELVWNITQNEWESFIFKNKDKNGK</sequence>
<reference key="1">
    <citation type="submission" date="2006-11" db="EMBL/GenBank/DDBJ databases">
        <title>Sequence of Campylobacter fetus subsp. fetus 82-40.</title>
        <authorList>
            <person name="Fouts D.E."/>
            <person name="Nelson K.E."/>
        </authorList>
    </citation>
    <scope>NUCLEOTIDE SEQUENCE [LARGE SCALE GENOMIC DNA]</scope>
    <source>
        <strain>82-40</strain>
    </source>
</reference>